<keyword id="KW-0963">Cytoplasm</keyword>
<keyword id="KW-0378">Hydrolase</keyword>
<keyword id="KW-0546">Nucleotide metabolism</keyword>
<evidence type="ECO:0000255" key="1">
    <source>
        <dbReference type="HAMAP-Rule" id="MF_00528"/>
    </source>
</evidence>
<feature type="chain" id="PRO_0000267382" description="7-methyl-GTP pyrophosphatase">
    <location>
        <begin position="1"/>
        <end position="192"/>
    </location>
</feature>
<feature type="active site" description="Proton acceptor" evidence="1">
    <location>
        <position position="69"/>
    </location>
</feature>
<feature type="site" description="Important for substrate specificity" evidence="1">
    <location>
        <position position="12"/>
    </location>
</feature>
<feature type="site" description="Important for substrate specificity" evidence="1">
    <location>
        <position position="70"/>
    </location>
</feature>
<feature type="site" description="Important for substrate specificity" evidence="1">
    <location>
        <position position="154"/>
    </location>
</feature>
<protein>
    <recommendedName>
        <fullName evidence="1">7-methyl-GTP pyrophosphatase</fullName>
        <shortName evidence="1">m(7)GTP pyrophosphatase</shortName>
        <ecNumber evidence="1">3.6.1.-</ecNumber>
    </recommendedName>
</protein>
<reference key="1">
    <citation type="journal article" date="2005" name="J. Bacteriol.">
        <title>Whole-genome sequence analysis of Pseudomonas syringae pv. phaseolicola 1448A reveals divergence among pathovars in genes involved in virulence and transposition.</title>
        <authorList>
            <person name="Joardar V."/>
            <person name="Lindeberg M."/>
            <person name="Jackson R.W."/>
            <person name="Selengut J."/>
            <person name="Dodson R."/>
            <person name="Brinkac L.M."/>
            <person name="Daugherty S.C."/>
            <person name="DeBoy R.T."/>
            <person name="Durkin A.S."/>
            <person name="Gwinn Giglio M."/>
            <person name="Madupu R."/>
            <person name="Nelson W.C."/>
            <person name="Rosovitz M.J."/>
            <person name="Sullivan S.A."/>
            <person name="Crabtree J."/>
            <person name="Creasy T."/>
            <person name="Davidsen T.M."/>
            <person name="Haft D.H."/>
            <person name="Zafar N."/>
            <person name="Zhou L."/>
            <person name="Halpin R."/>
            <person name="Holley T."/>
            <person name="Khouri H.M."/>
            <person name="Feldblyum T.V."/>
            <person name="White O."/>
            <person name="Fraser C.M."/>
            <person name="Chatterjee A.K."/>
            <person name="Cartinhour S."/>
            <person name="Schneider D."/>
            <person name="Mansfield J.W."/>
            <person name="Collmer A."/>
            <person name="Buell R."/>
        </authorList>
    </citation>
    <scope>NUCLEOTIDE SEQUENCE [LARGE SCALE GENOMIC DNA]</scope>
    <source>
        <strain>1448A / Race 6</strain>
    </source>
</reference>
<accession>Q48L46</accession>
<gene>
    <name type="ordered locus">PSPPH_1636</name>
</gene>
<comment type="function">
    <text evidence="1">Nucleoside triphosphate pyrophosphatase that hydrolyzes 7-methyl-GTP (m(7)GTP). May have a dual role in cell division arrest and in preventing the incorporation of modified nucleotides into cellular nucleic acids.</text>
</comment>
<comment type="catalytic activity">
    <reaction evidence="1">
        <text>N(7)-methyl-GTP + H2O = N(7)-methyl-GMP + diphosphate + H(+)</text>
        <dbReference type="Rhea" id="RHEA:58744"/>
        <dbReference type="ChEBI" id="CHEBI:15377"/>
        <dbReference type="ChEBI" id="CHEBI:15378"/>
        <dbReference type="ChEBI" id="CHEBI:33019"/>
        <dbReference type="ChEBI" id="CHEBI:58285"/>
        <dbReference type="ChEBI" id="CHEBI:87133"/>
    </reaction>
</comment>
<comment type="cofactor">
    <cofactor evidence="1">
        <name>a divalent metal cation</name>
        <dbReference type="ChEBI" id="CHEBI:60240"/>
    </cofactor>
</comment>
<comment type="subcellular location">
    <subcellularLocation>
        <location evidence="1">Cytoplasm</location>
    </subcellularLocation>
</comment>
<comment type="similarity">
    <text evidence="1">Belongs to the Maf family. YceF subfamily.</text>
</comment>
<name>NTPPB_PSE14</name>
<dbReference type="EC" id="3.6.1.-" evidence="1"/>
<dbReference type="EMBL" id="CP000058">
    <property type="protein sequence ID" value="AAZ37088.1"/>
    <property type="molecule type" value="Genomic_DNA"/>
</dbReference>
<dbReference type="RefSeq" id="WP_011168135.1">
    <property type="nucleotide sequence ID" value="NC_005773.3"/>
</dbReference>
<dbReference type="SMR" id="Q48L46"/>
<dbReference type="KEGG" id="psp:PSPPH_1636"/>
<dbReference type="eggNOG" id="COG0424">
    <property type="taxonomic scope" value="Bacteria"/>
</dbReference>
<dbReference type="HOGENOM" id="CLU_040416_1_0_6"/>
<dbReference type="Proteomes" id="UP000000551">
    <property type="component" value="Chromosome"/>
</dbReference>
<dbReference type="GO" id="GO:0005737">
    <property type="term" value="C:cytoplasm"/>
    <property type="evidence" value="ECO:0007669"/>
    <property type="project" value="UniProtKB-SubCell"/>
</dbReference>
<dbReference type="GO" id="GO:0047429">
    <property type="term" value="F:nucleoside triphosphate diphosphatase activity"/>
    <property type="evidence" value="ECO:0007669"/>
    <property type="project" value="InterPro"/>
</dbReference>
<dbReference type="GO" id="GO:0009117">
    <property type="term" value="P:nucleotide metabolic process"/>
    <property type="evidence" value="ECO:0007669"/>
    <property type="project" value="UniProtKB-KW"/>
</dbReference>
<dbReference type="CDD" id="cd00555">
    <property type="entry name" value="Maf"/>
    <property type="match status" value="1"/>
</dbReference>
<dbReference type="FunFam" id="3.90.950.10:FF:000005">
    <property type="entry name" value="7-methyl-GTP pyrophosphatase"/>
    <property type="match status" value="1"/>
</dbReference>
<dbReference type="Gene3D" id="3.90.950.10">
    <property type="match status" value="1"/>
</dbReference>
<dbReference type="HAMAP" id="MF_00528">
    <property type="entry name" value="Maf"/>
    <property type="match status" value="1"/>
</dbReference>
<dbReference type="InterPro" id="IPR029001">
    <property type="entry name" value="ITPase-like_fam"/>
</dbReference>
<dbReference type="InterPro" id="IPR003697">
    <property type="entry name" value="Maf-like"/>
</dbReference>
<dbReference type="NCBIfam" id="TIGR00172">
    <property type="entry name" value="maf"/>
    <property type="match status" value="1"/>
</dbReference>
<dbReference type="PANTHER" id="PTHR43213:SF10">
    <property type="entry name" value="7-METHYL-GTP PYROPHOSPHATASE"/>
    <property type="match status" value="1"/>
</dbReference>
<dbReference type="PANTHER" id="PTHR43213">
    <property type="entry name" value="BIFUNCTIONAL DTTP/UTP PYROPHOSPHATASE/METHYLTRANSFERASE PROTEIN-RELATED"/>
    <property type="match status" value="1"/>
</dbReference>
<dbReference type="Pfam" id="PF02545">
    <property type="entry name" value="Maf"/>
    <property type="match status" value="1"/>
</dbReference>
<dbReference type="PIRSF" id="PIRSF006305">
    <property type="entry name" value="Maf"/>
    <property type="match status" value="1"/>
</dbReference>
<dbReference type="SUPFAM" id="SSF52972">
    <property type="entry name" value="ITPase-like"/>
    <property type="match status" value="1"/>
</dbReference>
<organism>
    <name type="scientific">Pseudomonas savastanoi pv. phaseolicola (strain 1448A / Race 6)</name>
    <name type="common">Pseudomonas syringae pv. phaseolicola (strain 1448A / Race 6)</name>
    <dbReference type="NCBI Taxonomy" id="264730"/>
    <lineage>
        <taxon>Bacteria</taxon>
        <taxon>Pseudomonadati</taxon>
        <taxon>Pseudomonadota</taxon>
        <taxon>Gammaproteobacteria</taxon>
        <taxon>Pseudomonadales</taxon>
        <taxon>Pseudomonadaceae</taxon>
        <taxon>Pseudomonas</taxon>
    </lineage>
</organism>
<sequence>MPSLLLASSSSYRRELLTRLRLPFTCKSPDIDESHRLDETAHDLVRRLALEKARALAGEYPHHLIIGSDQVAVLNGQILGKPHTFERALEQLTAASGTSVTFLTGLALLNSSTGEHQVDCVPFTVHMRELDQASIERYLHAEQPYDCAGSFKAEGLGVSLFRSTEGSDATSLIGLPLIRLVDMLIKEGVSVP</sequence>
<proteinExistence type="inferred from homology"/>